<comment type="function">
    <text evidence="1">Catalyzes the irreversible cleavage of the glycosidic bond in both 5'-methylthioadenosine (MTA) and S-adenosylhomocysteine (SAH/AdoHcy) to adenine and the corresponding thioribose, 5'-methylthioribose and S-ribosylhomocysteine, respectively. Also cleaves 5'-deoxyadenosine, a toxic by-product of radical S-adenosylmethionine (SAM) enzymes, into 5-deoxyribose and adenine.</text>
</comment>
<comment type="catalytic activity">
    <reaction evidence="1">
        <text>S-adenosyl-L-homocysteine + H2O = S-(5-deoxy-D-ribos-5-yl)-L-homocysteine + adenine</text>
        <dbReference type="Rhea" id="RHEA:17805"/>
        <dbReference type="ChEBI" id="CHEBI:15377"/>
        <dbReference type="ChEBI" id="CHEBI:16708"/>
        <dbReference type="ChEBI" id="CHEBI:57856"/>
        <dbReference type="ChEBI" id="CHEBI:58195"/>
        <dbReference type="EC" id="3.2.2.9"/>
    </reaction>
</comment>
<comment type="catalytic activity">
    <reaction evidence="1">
        <text>S-methyl-5'-thioadenosine + H2O = 5-(methylsulfanyl)-D-ribose + adenine</text>
        <dbReference type="Rhea" id="RHEA:13617"/>
        <dbReference type="ChEBI" id="CHEBI:15377"/>
        <dbReference type="ChEBI" id="CHEBI:16708"/>
        <dbReference type="ChEBI" id="CHEBI:17509"/>
        <dbReference type="ChEBI" id="CHEBI:78440"/>
        <dbReference type="EC" id="3.2.2.9"/>
    </reaction>
</comment>
<comment type="catalytic activity">
    <reaction evidence="1">
        <text>5'-deoxyadenosine + H2O = 5-deoxy-D-ribose + adenine</text>
        <dbReference type="Rhea" id="RHEA:29859"/>
        <dbReference type="ChEBI" id="CHEBI:15377"/>
        <dbReference type="ChEBI" id="CHEBI:16708"/>
        <dbReference type="ChEBI" id="CHEBI:17319"/>
        <dbReference type="ChEBI" id="CHEBI:149540"/>
        <dbReference type="EC" id="3.2.2.9"/>
    </reaction>
    <physiologicalReaction direction="left-to-right" evidence="1">
        <dbReference type="Rhea" id="RHEA:29860"/>
    </physiologicalReaction>
</comment>
<comment type="pathway">
    <text evidence="1">Amino-acid biosynthesis; L-methionine biosynthesis via salvage pathway; S-methyl-5-thio-alpha-D-ribose 1-phosphate from S-methyl-5'-thioadenosine (hydrolase route): step 1/2.</text>
</comment>
<comment type="similarity">
    <text evidence="1">Belongs to the PNP/UDP phosphorylase family. MtnN subfamily.</text>
</comment>
<proteinExistence type="inferred from homology"/>
<sequence>MRIAVIGAMEEEVRILRDKLEQAETETVAGCEFTKGLLAGHEVILLKSGIGKVNAAMSTTILLEKYKPEKVINTGSAGGFHHSLNVGDVVISTEVRHHDVDVTAFNYEYGQVPGMPPGFKADEALVALAEKCMQAEENIQVVKGMIATGDSFMSDPNRVAAIRDKFENLYAVEMEAAAVAQVCHQYEIPFVIIRALSDIAGKESNVSFDQFLDQAALHSTNFIVKVLEELK</sequence>
<keyword id="KW-0028">Amino-acid biosynthesis</keyword>
<keyword id="KW-0378">Hydrolase</keyword>
<keyword id="KW-0486">Methionine biosynthesis</keyword>
<reference key="1">
    <citation type="submission" date="2008-10" db="EMBL/GenBank/DDBJ databases">
        <title>Genome sequence of Bacillus cereus B4264.</title>
        <authorList>
            <person name="Dodson R.J."/>
            <person name="Durkin A.S."/>
            <person name="Rosovitz M.J."/>
            <person name="Rasko D.A."/>
            <person name="Hoffmaster A."/>
            <person name="Ravel J."/>
            <person name="Sutton G."/>
        </authorList>
    </citation>
    <scope>NUCLEOTIDE SEQUENCE [LARGE SCALE GENOMIC DNA]</scope>
    <source>
        <strain>B4264</strain>
    </source>
</reference>
<gene>
    <name evidence="1" type="primary">mtnN</name>
    <name type="ordered locus">BCB4264_A4493</name>
</gene>
<evidence type="ECO:0000255" key="1">
    <source>
        <dbReference type="HAMAP-Rule" id="MF_01684"/>
    </source>
</evidence>
<name>MTNN_BACC4</name>
<protein>
    <recommendedName>
        <fullName evidence="1">5'-methylthioadenosine/S-adenosylhomocysteine nucleosidase</fullName>
        <shortName evidence="1">MTA/SAH nucleosidase</shortName>
        <shortName evidence="1">MTAN</shortName>
        <ecNumber evidence="1">3.2.2.9</ecNumber>
    </recommendedName>
    <alternativeName>
        <fullName evidence="1">5'-deoxyadenosine nucleosidase</fullName>
        <shortName evidence="1">DOA nucleosidase</shortName>
        <shortName evidence="1">dAdo nucleosidase</shortName>
    </alternativeName>
    <alternativeName>
        <fullName evidence="1">5'-methylthioadenosine nucleosidase</fullName>
        <shortName evidence="1">MTA nucleosidase</shortName>
    </alternativeName>
    <alternativeName>
        <fullName evidence="1">S-adenosylhomocysteine nucleosidase</fullName>
        <shortName evidence="1">AdoHcy nucleosidase</shortName>
        <shortName evidence="1">SAH nucleosidase</shortName>
        <shortName evidence="1">SRH nucleosidase</shortName>
    </alternativeName>
</protein>
<feature type="chain" id="PRO_1000187412" description="5'-methylthioadenosine/S-adenosylhomocysteine nucleosidase">
    <location>
        <begin position="1"/>
        <end position="231"/>
    </location>
</feature>
<feature type="active site" description="Proton acceptor" evidence="1">
    <location>
        <position position="12"/>
    </location>
</feature>
<feature type="active site" description="Proton donor" evidence="1">
    <location>
        <position position="198"/>
    </location>
</feature>
<feature type="binding site" evidence="1">
    <location>
        <position position="78"/>
    </location>
    <ligand>
        <name>substrate</name>
    </ligand>
</feature>
<feature type="binding site" evidence="1">
    <location>
        <position position="153"/>
    </location>
    <ligand>
        <name>substrate</name>
    </ligand>
</feature>
<feature type="binding site" evidence="1">
    <location>
        <begin position="174"/>
        <end position="175"/>
    </location>
    <ligand>
        <name>substrate</name>
    </ligand>
</feature>
<organism>
    <name type="scientific">Bacillus cereus (strain B4264)</name>
    <dbReference type="NCBI Taxonomy" id="405532"/>
    <lineage>
        <taxon>Bacteria</taxon>
        <taxon>Bacillati</taxon>
        <taxon>Bacillota</taxon>
        <taxon>Bacilli</taxon>
        <taxon>Bacillales</taxon>
        <taxon>Bacillaceae</taxon>
        <taxon>Bacillus</taxon>
        <taxon>Bacillus cereus group</taxon>
    </lineage>
</organism>
<accession>B7HE08</accession>
<dbReference type="EC" id="3.2.2.9" evidence="1"/>
<dbReference type="EMBL" id="CP001176">
    <property type="protein sequence ID" value="ACK62693.1"/>
    <property type="molecule type" value="Genomic_DNA"/>
</dbReference>
<dbReference type="RefSeq" id="WP_001217024.1">
    <property type="nucleotide sequence ID" value="NZ_VEHB01000006.1"/>
</dbReference>
<dbReference type="SMR" id="B7HE08"/>
<dbReference type="KEGG" id="bcb:BCB4264_A4493"/>
<dbReference type="HOGENOM" id="CLU_031248_2_2_9"/>
<dbReference type="UniPathway" id="UPA00904">
    <property type="reaction ID" value="UER00871"/>
</dbReference>
<dbReference type="Proteomes" id="UP000007096">
    <property type="component" value="Chromosome"/>
</dbReference>
<dbReference type="GO" id="GO:0005829">
    <property type="term" value="C:cytosol"/>
    <property type="evidence" value="ECO:0007669"/>
    <property type="project" value="TreeGrafter"/>
</dbReference>
<dbReference type="GO" id="GO:0008782">
    <property type="term" value="F:adenosylhomocysteine nucleosidase activity"/>
    <property type="evidence" value="ECO:0007669"/>
    <property type="project" value="UniProtKB-UniRule"/>
</dbReference>
<dbReference type="GO" id="GO:0008930">
    <property type="term" value="F:methylthioadenosine nucleosidase activity"/>
    <property type="evidence" value="ECO:0007669"/>
    <property type="project" value="UniProtKB-UniRule"/>
</dbReference>
<dbReference type="GO" id="GO:0019509">
    <property type="term" value="P:L-methionine salvage from methylthioadenosine"/>
    <property type="evidence" value="ECO:0007669"/>
    <property type="project" value="UniProtKB-UniRule"/>
</dbReference>
<dbReference type="GO" id="GO:0019284">
    <property type="term" value="P:L-methionine salvage from S-adenosylmethionine"/>
    <property type="evidence" value="ECO:0007669"/>
    <property type="project" value="TreeGrafter"/>
</dbReference>
<dbReference type="GO" id="GO:0009164">
    <property type="term" value="P:nucleoside catabolic process"/>
    <property type="evidence" value="ECO:0007669"/>
    <property type="project" value="InterPro"/>
</dbReference>
<dbReference type="CDD" id="cd09008">
    <property type="entry name" value="MTAN"/>
    <property type="match status" value="1"/>
</dbReference>
<dbReference type="FunFam" id="3.40.50.1580:FF:000001">
    <property type="entry name" value="MTA/SAH nucleosidase family protein"/>
    <property type="match status" value="1"/>
</dbReference>
<dbReference type="Gene3D" id="3.40.50.1580">
    <property type="entry name" value="Nucleoside phosphorylase domain"/>
    <property type="match status" value="1"/>
</dbReference>
<dbReference type="HAMAP" id="MF_01684">
    <property type="entry name" value="Salvage_MtnN"/>
    <property type="match status" value="1"/>
</dbReference>
<dbReference type="InterPro" id="IPR010049">
    <property type="entry name" value="MTA_SAH_Nsdase"/>
</dbReference>
<dbReference type="InterPro" id="IPR000845">
    <property type="entry name" value="Nucleoside_phosphorylase_d"/>
</dbReference>
<dbReference type="InterPro" id="IPR035994">
    <property type="entry name" value="Nucleoside_phosphorylase_sf"/>
</dbReference>
<dbReference type="NCBIfam" id="TIGR01704">
    <property type="entry name" value="MTA_SAH-Nsdase"/>
    <property type="match status" value="1"/>
</dbReference>
<dbReference type="NCBIfam" id="NF004079">
    <property type="entry name" value="PRK05584.1"/>
    <property type="match status" value="1"/>
</dbReference>
<dbReference type="PANTHER" id="PTHR46832">
    <property type="entry name" value="5'-METHYLTHIOADENOSINE/S-ADENOSYLHOMOCYSTEINE NUCLEOSIDASE"/>
    <property type="match status" value="1"/>
</dbReference>
<dbReference type="PANTHER" id="PTHR46832:SF1">
    <property type="entry name" value="5'-METHYLTHIOADENOSINE_S-ADENOSYLHOMOCYSTEINE NUCLEOSIDASE"/>
    <property type="match status" value="1"/>
</dbReference>
<dbReference type="Pfam" id="PF01048">
    <property type="entry name" value="PNP_UDP_1"/>
    <property type="match status" value="1"/>
</dbReference>
<dbReference type="SUPFAM" id="SSF53167">
    <property type="entry name" value="Purine and uridine phosphorylases"/>
    <property type="match status" value="1"/>
</dbReference>